<comment type="function">
    <text evidence="1">Catalyzes the formation of acetyl phosphate from acetate and ATP. Can also catalyze the reverse reaction.</text>
</comment>
<comment type="catalytic activity">
    <reaction evidence="1">
        <text>acetate + ATP = acetyl phosphate + ADP</text>
        <dbReference type="Rhea" id="RHEA:11352"/>
        <dbReference type="ChEBI" id="CHEBI:22191"/>
        <dbReference type="ChEBI" id="CHEBI:30089"/>
        <dbReference type="ChEBI" id="CHEBI:30616"/>
        <dbReference type="ChEBI" id="CHEBI:456216"/>
        <dbReference type="EC" id="2.7.2.1"/>
    </reaction>
</comment>
<comment type="cofactor">
    <cofactor evidence="1">
        <name>Mg(2+)</name>
        <dbReference type="ChEBI" id="CHEBI:18420"/>
    </cofactor>
    <cofactor evidence="1">
        <name>Mn(2+)</name>
        <dbReference type="ChEBI" id="CHEBI:29035"/>
    </cofactor>
    <text evidence="1">Mg(2+). Can also accept Mn(2+).</text>
</comment>
<comment type="pathway">
    <text evidence="1">Metabolic intermediate biosynthesis; acetyl-CoA biosynthesis; acetyl-CoA from acetate: step 1/2.</text>
</comment>
<comment type="subunit">
    <text evidence="1">Homodimer.</text>
</comment>
<comment type="subcellular location">
    <subcellularLocation>
        <location evidence="1">Cytoplasm</location>
    </subcellularLocation>
</comment>
<comment type="similarity">
    <text evidence="1">Belongs to the acetokinase family.</text>
</comment>
<name>ACKA_CORGB</name>
<gene>
    <name evidence="1" type="primary">ackA</name>
    <name type="ordered locus">cgR_2655</name>
</gene>
<feature type="chain" id="PRO_1000002225" description="Acetate kinase">
    <location>
        <begin position="1"/>
        <end position="397"/>
    </location>
</feature>
<feature type="active site" description="Proton donor/acceptor" evidence="1">
    <location>
        <position position="149"/>
    </location>
</feature>
<feature type="binding site" evidence="1">
    <location>
        <position position="8"/>
    </location>
    <ligand>
        <name>Mg(2+)</name>
        <dbReference type="ChEBI" id="CHEBI:18420"/>
    </ligand>
</feature>
<feature type="binding site" evidence="1">
    <location>
        <position position="15"/>
    </location>
    <ligand>
        <name>ATP</name>
        <dbReference type="ChEBI" id="CHEBI:30616"/>
    </ligand>
</feature>
<feature type="binding site" evidence="1">
    <location>
        <position position="92"/>
    </location>
    <ligand>
        <name>substrate</name>
    </ligand>
</feature>
<feature type="binding site" evidence="1">
    <location>
        <begin position="209"/>
        <end position="213"/>
    </location>
    <ligand>
        <name>ATP</name>
        <dbReference type="ChEBI" id="CHEBI:30616"/>
    </ligand>
</feature>
<feature type="binding site" evidence="1">
    <location>
        <begin position="283"/>
        <end position="285"/>
    </location>
    <ligand>
        <name>ATP</name>
        <dbReference type="ChEBI" id="CHEBI:30616"/>
    </ligand>
</feature>
<feature type="binding site" evidence="1">
    <location>
        <begin position="331"/>
        <end position="335"/>
    </location>
    <ligand>
        <name>ATP</name>
        <dbReference type="ChEBI" id="CHEBI:30616"/>
    </ligand>
</feature>
<feature type="binding site" evidence="1">
    <location>
        <position position="385"/>
    </location>
    <ligand>
        <name>Mg(2+)</name>
        <dbReference type="ChEBI" id="CHEBI:18420"/>
    </ligand>
</feature>
<feature type="site" description="Transition state stabilizer" evidence="1">
    <location>
        <position position="181"/>
    </location>
</feature>
<feature type="site" description="Transition state stabilizer" evidence="1">
    <location>
        <position position="242"/>
    </location>
</feature>
<dbReference type="EC" id="2.7.2.1" evidence="1"/>
<dbReference type="EMBL" id="AP009044">
    <property type="protein sequence ID" value="BAF55670.1"/>
    <property type="molecule type" value="Genomic_DNA"/>
</dbReference>
<dbReference type="RefSeq" id="WP_011897943.1">
    <property type="nucleotide sequence ID" value="NC_009342.1"/>
</dbReference>
<dbReference type="SMR" id="A4QHF4"/>
<dbReference type="KEGG" id="cgt:cgR_2655"/>
<dbReference type="HOGENOM" id="CLU_020352_0_1_11"/>
<dbReference type="PhylomeDB" id="A4QHF4"/>
<dbReference type="UniPathway" id="UPA00340">
    <property type="reaction ID" value="UER00458"/>
</dbReference>
<dbReference type="Proteomes" id="UP000006698">
    <property type="component" value="Chromosome"/>
</dbReference>
<dbReference type="GO" id="GO:0005737">
    <property type="term" value="C:cytoplasm"/>
    <property type="evidence" value="ECO:0007669"/>
    <property type="project" value="UniProtKB-SubCell"/>
</dbReference>
<dbReference type="GO" id="GO:0008776">
    <property type="term" value="F:acetate kinase activity"/>
    <property type="evidence" value="ECO:0007669"/>
    <property type="project" value="UniProtKB-UniRule"/>
</dbReference>
<dbReference type="GO" id="GO:0005524">
    <property type="term" value="F:ATP binding"/>
    <property type="evidence" value="ECO:0007669"/>
    <property type="project" value="UniProtKB-KW"/>
</dbReference>
<dbReference type="GO" id="GO:0000287">
    <property type="term" value="F:magnesium ion binding"/>
    <property type="evidence" value="ECO:0007669"/>
    <property type="project" value="UniProtKB-UniRule"/>
</dbReference>
<dbReference type="GO" id="GO:0006083">
    <property type="term" value="P:acetate metabolic process"/>
    <property type="evidence" value="ECO:0007669"/>
    <property type="project" value="TreeGrafter"/>
</dbReference>
<dbReference type="GO" id="GO:0006085">
    <property type="term" value="P:acetyl-CoA biosynthetic process"/>
    <property type="evidence" value="ECO:0007669"/>
    <property type="project" value="UniProtKB-UniRule"/>
</dbReference>
<dbReference type="CDD" id="cd24010">
    <property type="entry name" value="ASKHA_NBD_AcK_PK"/>
    <property type="match status" value="1"/>
</dbReference>
<dbReference type="Gene3D" id="3.30.420.40">
    <property type="match status" value="2"/>
</dbReference>
<dbReference type="HAMAP" id="MF_00020">
    <property type="entry name" value="Acetate_kinase"/>
    <property type="match status" value="1"/>
</dbReference>
<dbReference type="InterPro" id="IPR004372">
    <property type="entry name" value="Ac/propionate_kinase"/>
</dbReference>
<dbReference type="InterPro" id="IPR000890">
    <property type="entry name" value="Aliphatic_acid_kin_short-chain"/>
</dbReference>
<dbReference type="InterPro" id="IPR023865">
    <property type="entry name" value="Aliphatic_acid_kinase_CS"/>
</dbReference>
<dbReference type="InterPro" id="IPR043129">
    <property type="entry name" value="ATPase_NBD"/>
</dbReference>
<dbReference type="NCBIfam" id="TIGR00016">
    <property type="entry name" value="ackA"/>
    <property type="match status" value="1"/>
</dbReference>
<dbReference type="PANTHER" id="PTHR21060">
    <property type="entry name" value="ACETATE KINASE"/>
    <property type="match status" value="1"/>
</dbReference>
<dbReference type="PANTHER" id="PTHR21060:SF15">
    <property type="entry name" value="ACETATE KINASE-RELATED"/>
    <property type="match status" value="1"/>
</dbReference>
<dbReference type="Pfam" id="PF00871">
    <property type="entry name" value="Acetate_kinase"/>
    <property type="match status" value="1"/>
</dbReference>
<dbReference type="PIRSF" id="PIRSF000722">
    <property type="entry name" value="Acetate_prop_kin"/>
    <property type="match status" value="1"/>
</dbReference>
<dbReference type="PRINTS" id="PR00471">
    <property type="entry name" value="ACETATEKNASE"/>
</dbReference>
<dbReference type="SUPFAM" id="SSF53067">
    <property type="entry name" value="Actin-like ATPase domain"/>
    <property type="match status" value="2"/>
</dbReference>
<dbReference type="PROSITE" id="PS01075">
    <property type="entry name" value="ACETATE_KINASE_1"/>
    <property type="match status" value="1"/>
</dbReference>
<dbReference type="PROSITE" id="PS01076">
    <property type="entry name" value="ACETATE_KINASE_2"/>
    <property type="match status" value="1"/>
</dbReference>
<proteinExistence type="inferred from homology"/>
<evidence type="ECO:0000255" key="1">
    <source>
        <dbReference type="HAMAP-Rule" id="MF_00020"/>
    </source>
</evidence>
<keyword id="KW-0067">ATP-binding</keyword>
<keyword id="KW-0963">Cytoplasm</keyword>
<keyword id="KW-0418">Kinase</keyword>
<keyword id="KW-0460">Magnesium</keyword>
<keyword id="KW-0479">Metal-binding</keyword>
<keyword id="KW-0547">Nucleotide-binding</keyword>
<keyword id="KW-0808">Transferase</keyword>
<sequence length="397" mass="43092">MALALVLNSGSSSIKFQLVNPENSAIDEPYVSGLVEQIGEPNGRIVLKVEGEKYTLETPIADHSEGLNLAFDLMDQHNCGPSQLEITAVGHRVVHGGILFSAPELITDEIVEMIRDLIPLAPLHNPANVDGIDVARKILPDVPHVAVFDTGFFHSLPPAAALYAINKDVAAEHGIRRYGFHGTSHEFVSKRVVEILEKPTEEINTITFHLGNGASMAAVQGGRAVDTSMGMTPLAGLVMGTRSGDIDPGIVFHLSRTAGMSIDEIDNLLNKKSGVKGLSGVNDFRELREMIDNNDQDAWSAYNIYIHQLRRYLGSYMVALGRVDTIVFTAGVGENAQFVREDALAGLEMYGIEIDPERNALPNDGPRLISTDASQVKVFVIPTNEELAIARYAVKFA</sequence>
<protein>
    <recommendedName>
        <fullName evidence="1">Acetate kinase</fullName>
        <ecNumber evidence="1">2.7.2.1</ecNumber>
    </recommendedName>
    <alternativeName>
        <fullName evidence="1">Acetokinase</fullName>
    </alternativeName>
</protein>
<organism>
    <name type="scientific">Corynebacterium glutamicum (strain R)</name>
    <dbReference type="NCBI Taxonomy" id="340322"/>
    <lineage>
        <taxon>Bacteria</taxon>
        <taxon>Bacillati</taxon>
        <taxon>Actinomycetota</taxon>
        <taxon>Actinomycetes</taxon>
        <taxon>Mycobacteriales</taxon>
        <taxon>Corynebacteriaceae</taxon>
        <taxon>Corynebacterium</taxon>
    </lineage>
</organism>
<accession>A4QHF4</accession>
<reference key="1">
    <citation type="journal article" date="2007" name="Microbiology">
        <title>Comparative analysis of the Corynebacterium glutamicum group and complete genome sequence of strain R.</title>
        <authorList>
            <person name="Yukawa H."/>
            <person name="Omumasaba C.A."/>
            <person name="Nonaka H."/>
            <person name="Kos P."/>
            <person name="Okai N."/>
            <person name="Suzuki N."/>
            <person name="Suda M."/>
            <person name="Tsuge Y."/>
            <person name="Watanabe J."/>
            <person name="Ikeda Y."/>
            <person name="Vertes A.A."/>
            <person name="Inui M."/>
        </authorList>
    </citation>
    <scope>NUCLEOTIDE SEQUENCE [LARGE SCALE GENOMIC DNA]</scope>
    <source>
        <strain>R</strain>
    </source>
</reference>